<proteinExistence type="evidence at transcript level"/>
<evidence type="ECO:0000250" key="1">
    <source>
        <dbReference type="UniProtKB" id="O00148"/>
    </source>
</evidence>
<evidence type="ECO:0000255" key="2">
    <source>
        <dbReference type="PROSITE-ProRule" id="PRU00541"/>
    </source>
</evidence>
<evidence type="ECO:0000255" key="3">
    <source>
        <dbReference type="PROSITE-ProRule" id="PRU00542"/>
    </source>
</evidence>
<evidence type="ECO:0000256" key="4">
    <source>
        <dbReference type="SAM" id="MobiDB-lite"/>
    </source>
</evidence>
<evidence type="ECO:0000305" key="5"/>
<reference key="1">
    <citation type="submission" date="1998-05" db="EMBL/GenBank/DDBJ databases">
        <title>Cellular genes modulated by a transactivator Tax of HTLV-1.</title>
        <authorList>
            <person name="Shimizu T."/>
        </authorList>
    </citation>
    <scope>NUCLEOTIDE SEQUENCE [MRNA]</scope>
    <source>
        <strain>Fischer</strain>
    </source>
</reference>
<reference key="2">
    <citation type="journal article" date="2004" name="Genome Res.">
        <title>The status, quality, and expansion of the NIH full-length cDNA project: the Mammalian Gene Collection (MGC).</title>
        <authorList>
            <consortium name="The MGC Project Team"/>
        </authorList>
    </citation>
    <scope>NUCLEOTIDE SEQUENCE [LARGE SCALE MRNA]</scope>
    <source>
        <tissue>Testis</tissue>
    </source>
</reference>
<feature type="initiator methionine" description="Removed" evidence="1">
    <location>
        <position position="1"/>
    </location>
</feature>
<feature type="chain" id="PRO_0000055069" description="ATP-dependent RNA helicase DDX39A">
    <location>
        <begin position="2"/>
        <end position="427"/>
    </location>
</feature>
<feature type="domain" description="Helicase ATP-binding" evidence="2">
    <location>
        <begin position="75"/>
        <end position="248"/>
    </location>
</feature>
<feature type="domain" description="Helicase C-terminal" evidence="3">
    <location>
        <begin position="260"/>
        <end position="421"/>
    </location>
</feature>
<feature type="region of interest" description="Disordered" evidence="4">
    <location>
        <begin position="1"/>
        <end position="35"/>
    </location>
</feature>
<feature type="short sequence motif" description="Q motif">
    <location>
        <begin position="44"/>
        <end position="72"/>
    </location>
</feature>
<feature type="short sequence motif" description="DECD box">
    <location>
        <begin position="195"/>
        <end position="198"/>
    </location>
</feature>
<feature type="compositionally biased region" description="Acidic residues" evidence="4">
    <location>
        <begin position="1"/>
        <end position="19"/>
    </location>
</feature>
<feature type="binding site" evidence="2">
    <location>
        <begin position="88"/>
        <end position="95"/>
    </location>
    <ligand>
        <name>ATP</name>
        <dbReference type="ChEBI" id="CHEBI:30616"/>
    </ligand>
</feature>
<feature type="modified residue" description="N-acetylalanine" evidence="1">
    <location>
        <position position="2"/>
    </location>
</feature>
<feature type="modified residue" description="N6-acetyllysine; alternate" evidence="1">
    <location>
        <position position="35"/>
    </location>
</feature>
<feature type="modified residue" description="Phosphoserine" evidence="1">
    <location>
        <position position="37"/>
    </location>
</feature>
<feature type="modified residue" description="Phosphothreonine" evidence="1">
    <location>
        <position position="171"/>
    </location>
</feature>
<feature type="modified residue" description="Phosphoserine" evidence="1">
    <location>
        <position position="426"/>
    </location>
</feature>
<feature type="cross-link" description="Glycyl lysine isopeptide (Lys-Gly) (interchain with G-Cter in SUMO2)" evidence="1">
    <location>
        <position position="31"/>
    </location>
</feature>
<feature type="cross-link" description="Glycyl lysine isopeptide (Lys-Gly) (interchain with G-Cter in SUMO2); alternate" evidence="1">
    <location>
        <position position="35"/>
    </location>
</feature>
<feature type="cross-link" description="Glycyl lysine isopeptide (Lys-Gly) (interchain with G-Cter in SUMO2)" evidence="1">
    <location>
        <position position="154"/>
    </location>
</feature>
<feature type="cross-link" description="Glycyl lysine isopeptide (Lys-Gly) (interchain with G-Cter in SUMO2)" evidence="1">
    <location>
        <position position="162"/>
    </location>
</feature>
<feature type="cross-link" description="Glycyl lysine isopeptide (Lys-Gly) (interchain with G-Cter in SUMO2)" evidence="1">
    <location>
        <position position="240"/>
    </location>
</feature>
<feature type="cross-link" description="Glycyl lysine isopeptide (Lys-Gly) (interchain with G-Cter in SUMO2)" evidence="1">
    <location>
        <position position="255"/>
    </location>
</feature>
<feature type="sequence conflict" description="In Ref. 1; AAC16391." evidence="5" ref="1">
    <original>K</original>
    <variation>T</variation>
    <location>
        <position position="130"/>
    </location>
</feature>
<accession>Q5U216</accession>
<accession>O70498</accession>
<organism>
    <name type="scientific">Rattus norvegicus</name>
    <name type="common">Rat</name>
    <dbReference type="NCBI Taxonomy" id="10116"/>
    <lineage>
        <taxon>Eukaryota</taxon>
        <taxon>Metazoa</taxon>
        <taxon>Chordata</taxon>
        <taxon>Craniata</taxon>
        <taxon>Vertebrata</taxon>
        <taxon>Euteleostomi</taxon>
        <taxon>Mammalia</taxon>
        <taxon>Eutheria</taxon>
        <taxon>Euarchontoglires</taxon>
        <taxon>Glires</taxon>
        <taxon>Rodentia</taxon>
        <taxon>Myomorpha</taxon>
        <taxon>Muroidea</taxon>
        <taxon>Muridae</taxon>
        <taxon>Murinae</taxon>
        <taxon>Rattus</taxon>
    </lineage>
</organism>
<keyword id="KW-0007">Acetylation</keyword>
<keyword id="KW-0067">ATP-binding</keyword>
<keyword id="KW-0963">Cytoplasm</keyword>
<keyword id="KW-0347">Helicase</keyword>
<keyword id="KW-0378">Hydrolase</keyword>
<keyword id="KW-1017">Isopeptide bond</keyword>
<keyword id="KW-0507">mRNA processing</keyword>
<keyword id="KW-0508">mRNA splicing</keyword>
<keyword id="KW-0547">Nucleotide-binding</keyword>
<keyword id="KW-0539">Nucleus</keyword>
<keyword id="KW-0597">Phosphoprotein</keyword>
<keyword id="KW-1185">Reference proteome</keyword>
<keyword id="KW-0832">Ubl conjugation</keyword>
<gene>
    <name type="primary">Ddx39a</name>
    <name type="synonym">Ddx39</name>
    <name type="synonym">Ddxl</name>
</gene>
<name>DX39A_RAT</name>
<sequence length="427" mass="49109">MAEQDVENELLDYDEDEEPQVPQESTPAPPKKDVKGSYVSIHSSGFRDFLLKPELLRAIVDCGFEHPSEVQHECIPQAILGMDVLCQAKSGMGKTAVFVLATLQQIEPINGQVSVLVMCHTRELAFQISKEYERFSKYMPSVKVSVFFGGLSIKKDEDVLKKNCPHVVVGTPGRILALVRSRSLNLRNVKHFVLDECDKMLEQLDMRRDVQEIFRLTPHEKQCMMFSATLSKEIRPVCRKFMQDPMEVFVDDETKLTLHGLQQYYVKLKDSEKNRKLFDLLDVLEFNQVVIFVKSVQRCMALAQLLVEQNFPAIAIHRGMAQEERLSRYQQFKDFQRRILVATNLFGRGMDIERVNIVFNYDMPEDSDTYLHRVARAGRFGTKGLAVTFVSDENDAKILNDVQDRFEVNVAELPEEIDISTYIEQSR</sequence>
<dbReference type="EC" id="3.6.4.13"/>
<dbReference type="EMBL" id="AF063447">
    <property type="protein sequence ID" value="AAC16391.1"/>
    <property type="molecule type" value="mRNA"/>
</dbReference>
<dbReference type="EMBL" id="BC086328">
    <property type="protein sequence ID" value="AAH86328.1"/>
    <property type="molecule type" value="mRNA"/>
</dbReference>
<dbReference type="RefSeq" id="NP_446015.2">
    <property type="nucleotide sequence ID" value="NM_053563.2"/>
</dbReference>
<dbReference type="RefSeq" id="XP_006255376.1">
    <property type="nucleotide sequence ID" value="XM_006255314.3"/>
</dbReference>
<dbReference type="SMR" id="Q5U216"/>
<dbReference type="BioGRID" id="250149">
    <property type="interactions" value="1"/>
</dbReference>
<dbReference type="FunCoup" id="Q5U216">
    <property type="interactions" value="3991"/>
</dbReference>
<dbReference type="STRING" id="10116.ENSRNOP00000068949"/>
<dbReference type="GlyGen" id="Q5U216">
    <property type="glycosylation" value="1 site"/>
</dbReference>
<dbReference type="iPTMnet" id="Q5U216"/>
<dbReference type="PhosphoSitePlus" id="Q5U216"/>
<dbReference type="jPOST" id="Q5U216"/>
<dbReference type="PaxDb" id="10116-ENSRNOP00000040666"/>
<dbReference type="Ensembl" id="ENSRNOT00000090312.2">
    <property type="protein sequence ID" value="ENSRNOP00000068949.1"/>
    <property type="gene ID" value="ENSRNOG00000004373.7"/>
</dbReference>
<dbReference type="GeneID" id="89827"/>
<dbReference type="KEGG" id="rno:89827"/>
<dbReference type="AGR" id="RGD:619920"/>
<dbReference type="CTD" id="10212"/>
<dbReference type="RGD" id="619920">
    <property type="gene designation" value="Ddx39a"/>
</dbReference>
<dbReference type="eggNOG" id="KOG0329">
    <property type="taxonomic scope" value="Eukaryota"/>
</dbReference>
<dbReference type="GeneTree" id="ENSGT00940000154912"/>
<dbReference type="HOGENOM" id="CLU_003041_1_0_1"/>
<dbReference type="InParanoid" id="Q5U216"/>
<dbReference type="PhylomeDB" id="Q5U216"/>
<dbReference type="TreeFam" id="TF300442"/>
<dbReference type="Reactome" id="R-RNO-159236">
    <property type="pathway name" value="Transport of Mature mRNA derived from an Intron-Containing Transcript"/>
</dbReference>
<dbReference type="Reactome" id="R-RNO-72187">
    <property type="pathway name" value="mRNA 3'-end processing"/>
</dbReference>
<dbReference type="Reactome" id="R-RNO-73856">
    <property type="pathway name" value="RNA Polymerase II Transcription Termination"/>
</dbReference>
<dbReference type="PRO" id="PR:Q5U216"/>
<dbReference type="Proteomes" id="UP000002494">
    <property type="component" value="Chromosome 19"/>
</dbReference>
<dbReference type="Bgee" id="ENSRNOG00000004373">
    <property type="expression patterns" value="Expressed in thymus and 20 other cell types or tissues"/>
</dbReference>
<dbReference type="GO" id="GO:0005737">
    <property type="term" value="C:cytoplasm"/>
    <property type="evidence" value="ECO:0000266"/>
    <property type="project" value="RGD"/>
</dbReference>
<dbReference type="GO" id="GO:0005634">
    <property type="term" value="C:nucleus"/>
    <property type="evidence" value="ECO:0000266"/>
    <property type="project" value="RGD"/>
</dbReference>
<dbReference type="GO" id="GO:0005524">
    <property type="term" value="F:ATP binding"/>
    <property type="evidence" value="ECO:0007669"/>
    <property type="project" value="UniProtKB-KW"/>
</dbReference>
<dbReference type="GO" id="GO:0016887">
    <property type="term" value="F:ATP hydrolysis activity"/>
    <property type="evidence" value="ECO:0000266"/>
    <property type="project" value="RGD"/>
</dbReference>
<dbReference type="GO" id="GO:0042802">
    <property type="term" value="F:identical protein binding"/>
    <property type="evidence" value="ECO:0000266"/>
    <property type="project" value="RGD"/>
</dbReference>
<dbReference type="GO" id="GO:0003729">
    <property type="term" value="F:mRNA binding"/>
    <property type="evidence" value="ECO:0000318"/>
    <property type="project" value="GO_Central"/>
</dbReference>
<dbReference type="GO" id="GO:0003723">
    <property type="term" value="F:RNA binding"/>
    <property type="evidence" value="ECO:0000266"/>
    <property type="project" value="RGD"/>
</dbReference>
<dbReference type="GO" id="GO:0003724">
    <property type="term" value="F:RNA helicase activity"/>
    <property type="evidence" value="ECO:0000318"/>
    <property type="project" value="GO_Central"/>
</dbReference>
<dbReference type="GO" id="GO:0006406">
    <property type="term" value="P:mRNA export from nucleus"/>
    <property type="evidence" value="ECO:0000266"/>
    <property type="project" value="RGD"/>
</dbReference>
<dbReference type="GO" id="GO:0000398">
    <property type="term" value="P:mRNA splicing, via spliceosome"/>
    <property type="evidence" value="ECO:0000266"/>
    <property type="project" value="RGD"/>
</dbReference>
<dbReference type="GO" id="GO:0045824">
    <property type="term" value="P:negative regulation of innate immune response"/>
    <property type="evidence" value="ECO:0000266"/>
    <property type="project" value="RGD"/>
</dbReference>
<dbReference type="GO" id="GO:0046832">
    <property type="term" value="P:negative regulation of RNA export from nucleus"/>
    <property type="evidence" value="ECO:0000266"/>
    <property type="project" value="RGD"/>
</dbReference>
<dbReference type="CDD" id="cd17950">
    <property type="entry name" value="DEADc_DDX39"/>
    <property type="match status" value="1"/>
</dbReference>
<dbReference type="CDD" id="cd18787">
    <property type="entry name" value="SF2_C_DEAD"/>
    <property type="match status" value="1"/>
</dbReference>
<dbReference type="FunFam" id="3.40.50.300:FF:000111">
    <property type="entry name" value="DEAD-box ATP-dependent RNA helicase"/>
    <property type="match status" value="1"/>
</dbReference>
<dbReference type="FunFam" id="3.40.50.300:FF:000168">
    <property type="entry name" value="DEAD-box ATP-dependent RNA helicase 56-like"/>
    <property type="match status" value="1"/>
</dbReference>
<dbReference type="Gene3D" id="3.40.50.300">
    <property type="entry name" value="P-loop containing nucleotide triphosphate hydrolases"/>
    <property type="match status" value="2"/>
</dbReference>
<dbReference type="InterPro" id="IPR011545">
    <property type="entry name" value="DEAD/DEAH_box_helicase_dom"/>
</dbReference>
<dbReference type="InterPro" id="IPR014001">
    <property type="entry name" value="Helicase_ATP-bd"/>
</dbReference>
<dbReference type="InterPro" id="IPR001650">
    <property type="entry name" value="Helicase_C-like"/>
</dbReference>
<dbReference type="InterPro" id="IPR027417">
    <property type="entry name" value="P-loop_NTPase"/>
</dbReference>
<dbReference type="InterPro" id="IPR014014">
    <property type="entry name" value="RNA_helicase_DEAD_Q_motif"/>
</dbReference>
<dbReference type="PANTHER" id="PTHR47958">
    <property type="entry name" value="ATP-DEPENDENT RNA HELICASE DBP3"/>
    <property type="match status" value="1"/>
</dbReference>
<dbReference type="Pfam" id="PF00270">
    <property type="entry name" value="DEAD"/>
    <property type="match status" value="1"/>
</dbReference>
<dbReference type="Pfam" id="PF00271">
    <property type="entry name" value="Helicase_C"/>
    <property type="match status" value="1"/>
</dbReference>
<dbReference type="SMART" id="SM00487">
    <property type="entry name" value="DEXDc"/>
    <property type="match status" value="1"/>
</dbReference>
<dbReference type="SMART" id="SM00490">
    <property type="entry name" value="HELICc"/>
    <property type="match status" value="1"/>
</dbReference>
<dbReference type="SUPFAM" id="SSF52540">
    <property type="entry name" value="P-loop containing nucleoside triphosphate hydrolases"/>
    <property type="match status" value="1"/>
</dbReference>
<dbReference type="PROSITE" id="PS51192">
    <property type="entry name" value="HELICASE_ATP_BIND_1"/>
    <property type="match status" value="1"/>
</dbReference>
<dbReference type="PROSITE" id="PS51194">
    <property type="entry name" value="HELICASE_CTER"/>
    <property type="match status" value="1"/>
</dbReference>
<dbReference type="PROSITE" id="PS51195">
    <property type="entry name" value="Q_MOTIF"/>
    <property type="match status" value="1"/>
</dbReference>
<comment type="function">
    <text evidence="1">Helicase that plays an essential role in mRNA export and is involved in multiple steps in RNA metabolism including alternative splicing. Regulates nuclear mRNA export to the cytoplasm through association with ECD. Also involved in spliceosomal uridine-rich small nuclear RNA (U snRNA) export by stimulating the RNA binding of adapter PHAX. Plays a role in the negative regulation of type I IFN production by increasing the nuclear retention of antiviral transcripts and thus reducing their protein expression. Independently of the interferon pathway, plays an antiviral role against alphaviruses by binding to a 5' conserved sequence element in the viral genomic RNA.</text>
</comment>
<comment type="catalytic activity">
    <reaction>
        <text>ATP + H2O = ADP + phosphate + H(+)</text>
        <dbReference type="Rhea" id="RHEA:13065"/>
        <dbReference type="ChEBI" id="CHEBI:15377"/>
        <dbReference type="ChEBI" id="CHEBI:15378"/>
        <dbReference type="ChEBI" id="CHEBI:30616"/>
        <dbReference type="ChEBI" id="CHEBI:43474"/>
        <dbReference type="ChEBI" id="CHEBI:456216"/>
        <dbReference type="EC" id="3.6.4.13"/>
    </reaction>
</comment>
<comment type="subunit">
    <text evidence="1">Binds ALYREF/THOC4 and DDX39B/BAT1. Interacts with the apo-AREX complex component SARNP. Interacts with MX1. Interacts with MCM3AP isoform GANP. Interacts with ECD. Interacts with PHAX; this interaction stimulates PHAX RNA binding activity.</text>
</comment>
<comment type="subcellular location">
    <subcellularLocation>
        <location evidence="1">Nucleus</location>
    </subcellularLocation>
    <subcellularLocation>
        <location evidence="1">Cytoplasm</location>
    </subcellularLocation>
    <text evidence="1">Can translocate to the cytoplasm in the presence of MX1. Accumulates in the cytoplasm upon infection with chikungunya virus.</text>
</comment>
<comment type="PTM">
    <text evidence="1">SUMOylated by RANBP2; SUMOylation modification affects its ability to bind RNA.</text>
</comment>
<comment type="similarity">
    <text evidence="5">Belongs to the DEAD box helicase family. DECD subfamily.</text>
</comment>
<protein>
    <recommendedName>
        <fullName>ATP-dependent RNA helicase DDX39A</fullName>
        <ecNumber>3.6.4.13</ecNumber>
    </recommendedName>
    <alternativeName>
        <fullName>DEAD box protein 39</fullName>
    </alternativeName>
    <alternativeName>
        <fullName>Nuclear RNA helicase, DECD variant of DEAD box family</fullName>
    </alternativeName>
</protein>